<organism>
    <name type="scientific">Salmonella choleraesuis (strain SC-B67)</name>
    <dbReference type="NCBI Taxonomy" id="321314"/>
    <lineage>
        <taxon>Bacteria</taxon>
        <taxon>Pseudomonadati</taxon>
        <taxon>Pseudomonadota</taxon>
        <taxon>Gammaproteobacteria</taxon>
        <taxon>Enterobacterales</taxon>
        <taxon>Enterobacteriaceae</taxon>
        <taxon>Salmonella</taxon>
    </lineage>
</organism>
<accession>Q57GD5</accession>
<gene>
    <name evidence="1" type="primary">arcA</name>
    <name type="ordered locus">SCH_4321</name>
</gene>
<dbReference type="EC" id="3.5.3.6" evidence="1"/>
<dbReference type="EMBL" id="AE017220">
    <property type="protein sequence ID" value="AAX68227.1"/>
    <property type="molecule type" value="Genomic_DNA"/>
</dbReference>
<dbReference type="SMR" id="Q57GD5"/>
<dbReference type="KEGG" id="sec:SCH_4321"/>
<dbReference type="HOGENOM" id="CLU_052662_0_0_6"/>
<dbReference type="UniPathway" id="UPA00254">
    <property type="reaction ID" value="UER00364"/>
</dbReference>
<dbReference type="Proteomes" id="UP000000538">
    <property type="component" value="Chromosome"/>
</dbReference>
<dbReference type="GO" id="GO:0005737">
    <property type="term" value="C:cytoplasm"/>
    <property type="evidence" value="ECO:0007669"/>
    <property type="project" value="UniProtKB-SubCell"/>
</dbReference>
<dbReference type="GO" id="GO:0016990">
    <property type="term" value="F:arginine deiminase activity"/>
    <property type="evidence" value="ECO:0007669"/>
    <property type="project" value="UniProtKB-UniRule"/>
</dbReference>
<dbReference type="GO" id="GO:0019547">
    <property type="term" value="P:arginine catabolic process to ornithine"/>
    <property type="evidence" value="ECO:0007669"/>
    <property type="project" value="UniProtKB-UniRule"/>
</dbReference>
<dbReference type="GO" id="GO:0019546">
    <property type="term" value="P:arginine deiminase pathway"/>
    <property type="evidence" value="ECO:0007669"/>
    <property type="project" value="TreeGrafter"/>
</dbReference>
<dbReference type="FunFam" id="1.10.3930.10:FF:000002">
    <property type="entry name" value="Arginine deiminase"/>
    <property type="match status" value="1"/>
</dbReference>
<dbReference type="Gene3D" id="1.10.3930.10">
    <property type="entry name" value="Arginine deiminase"/>
    <property type="match status" value="1"/>
</dbReference>
<dbReference type="Gene3D" id="3.75.10.10">
    <property type="entry name" value="L-arginine/glycine Amidinotransferase, Chain A"/>
    <property type="match status" value="1"/>
</dbReference>
<dbReference type="HAMAP" id="MF_00242">
    <property type="entry name" value="Arg_deiminase"/>
    <property type="match status" value="1"/>
</dbReference>
<dbReference type="InterPro" id="IPR003876">
    <property type="entry name" value="Arg_deiminase"/>
</dbReference>
<dbReference type="NCBIfam" id="TIGR01078">
    <property type="entry name" value="arcA"/>
    <property type="match status" value="1"/>
</dbReference>
<dbReference type="NCBIfam" id="NF002381">
    <property type="entry name" value="PRK01388.1"/>
    <property type="match status" value="1"/>
</dbReference>
<dbReference type="PANTHER" id="PTHR47271">
    <property type="entry name" value="ARGININE DEIMINASE"/>
    <property type="match status" value="1"/>
</dbReference>
<dbReference type="PANTHER" id="PTHR47271:SF2">
    <property type="entry name" value="ARGININE DEIMINASE"/>
    <property type="match status" value="1"/>
</dbReference>
<dbReference type="Pfam" id="PF02274">
    <property type="entry name" value="ADI"/>
    <property type="match status" value="1"/>
</dbReference>
<dbReference type="PIRSF" id="PIRSF006356">
    <property type="entry name" value="Arg_deiminase"/>
    <property type="match status" value="1"/>
</dbReference>
<dbReference type="PRINTS" id="PR01466">
    <property type="entry name" value="ARGDEIMINASE"/>
</dbReference>
<dbReference type="SUPFAM" id="SSF55909">
    <property type="entry name" value="Pentein"/>
    <property type="match status" value="1"/>
</dbReference>
<feature type="chain" id="PRO_1000100744" description="Arginine deiminase">
    <location>
        <begin position="1"/>
        <end position="407"/>
    </location>
</feature>
<feature type="active site" description="Amidino-cysteine intermediate" evidence="1">
    <location>
        <position position="397"/>
    </location>
</feature>
<sequence>MMEKHFVGSEIGQLRSVMLHRPNLSLKRLTPSNCQELLFDDVLSVERAGEEHDIFANTLRQQGIEVLLLTDLLTQTLDVADAKAWLLDTQISDYRLGPTFAADIRAWLADMPHRELARHLSGGLTYGEIPASIKNMVVDTHDINDFIMKPLPNHLFTRDTSCWIYNGVSINPMAKPARQRETNNLRAIYRWHPQFAGGDFIKYFGDEDINYDHATLEGGDVLVIGRGAVLIGMSERTTPQGVEFLAQALFKHRQAERVIAVELPKHRSCMHLDTVMTHIDIDTFSVYPEVVRPDVQCWTLTPDGRGGLKRTQESTLVHALEKALGIDQVRLITTGGDAFEAEREQWNDANNVLTLRPGVVVGYERNIWTNEKYDKAGITVLPIPGDELGRGRGGARCMSCPLERDGI</sequence>
<evidence type="ECO:0000255" key="1">
    <source>
        <dbReference type="HAMAP-Rule" id="MF_00242"/>
    </source>
</evidence>
<keyword id="KW-0056">Arginine metabolism</keyword>
<keyword id="KW-0963">Cytoplasm</keyword>
<keyword id="KW-0378">Hydrolase</keyword>
<protein>
    <recommendedName>
        <fullName evidence="1">Arginine deiminase</fullName>
        <shortName evidence="1">ADI</shortName>
        <ecNumber evidence="1">3.5.3.6</ecNumber>
    </recommendedName>
    <alternativeName>
        <fullName evidence="1">Arginine dihydrolase</fullName>
        <shortName evidence="1">AD</shortName>
    </alternativeName>
</protein>
<comment type="catalytic activity">
    <reaction evidence="1">
        <text>L-arginine + H2O = L-citrulline + NH4(+)</text>
        <dbReference type="Rhea" id="RHEA:19597"/>
        <dbReference type="ChEBI" id="CHEBI:15377"/>
        <dbReference type="ChEBI" id="CHEBI:28938"/>
        <dbReference type="ChEBI" id="CHEBI:32682"/>
        <dbReference type="ChEBI" id="CHEBI:57743"/>
        <dbReference type="EC" id="3.5.3.6"/>
    </reaction>
</comment>
<comment type="pathway">
    <text evidence="1">Amino-acid degradation; L-arginine degradation via ADI pathway; carbamoyl phosphate from L-arginine: step 1/2.</text>
</comment>
<comment type="subcellular location">
    <subcellularLocation>
        <location evidence="1">Cytoplasm</location>
    </subcellularLocation>
</comment>
<comment type="similarity">
    <text evidence="1">Belongs to the arginine deiminase family.</text>
</comment>
<proteinExistence type="inferred from homology"/>
<name>ARCA_SALCH</name>
<reference key="1">
    <citation type="journal article" date="2005" name="Nucleic Acids Res.">
        <title>The genome sequence of Salmonella enterica serovar Choleraesuis, a highly invasive and resistant zoonotic pathogen.</title>
        <authorList>
            <person name="Chiu C.-H."/>
            <person name="Tang P."/>
            <person name="Chu C."/>
            <person name="Hu S."/>
            <person name="Bao Q."/>
            <person name="Yu J."/>
            <person name="Chou Y.-Y."/>
            <person name="Wang H.-S."/>
            <person name="Lee Y.-S."/>
        </authorList>
    </citation>
    <scope>NUCLEOTIDE SEQUENCE [LARGE SCALE GENOMIC DNA]</scope>
    <source>
        <strain>SC-B67</strain>
    </source>
</reference>